<dbReference type="EMBL" id="CP000230">
    <property type="protein sequence ID" value="ABC22626.1"/>
    <property type="molecule type" value="Genomic_DNA"/>
</dbReference>
<dbReference type="RefSeq" id="WP_011389579.1">
    <property type="nucleotide sequence ID" value="NC_007643.1"/>
</dbReference>
<dbReference type="RefSeq" id="YP_426913.1">
    <property type="nucleotide sequence ID" value="NC_007643.1"/>
</dbReference>
<dbReference type="SMR" id="Q2RTB9"/>
<dbReference type="STRING" id="269796.Rru_A1826"/>
<dbReference type="EnsemblBacteria" id="ABC22626">
    <property type="protein sequence ID" value="ABC22626"/>
    <property type="gene ID" value="Rru_A1826"/>
</dbReference>
<dbReference type="KEGG" id="rru:Rru_A1826"/>
<dbReference type="PATRIC" id="fig|269796.9.peg.1904"/>
<dbReference type="eggNOG" id="COG1327">
    <property type="taxonomic scope" value="Bacteria"/>
</dbReference>
<dbReference type="HOGENOM" id="CLU_108412_0_1_5"/>
<dbReference type="PhylomeDB" id="Q2RTB9"/>
<dbReference type="Proteomes" id="UP000001929">
    <property type="component" value="Chromosome"/>
</dbReference>
<dbReference type="GO" id="GO:0005524">
    <property type="term" value="F:ATP binding"/>
    <property type="evidence" value="ECO:0007669"/>
    <property type="project" value="UniProtKB-KW"/>
</dbReference>
<dbReference type="GO" id="GO:0003677">
    <property type="term" value="F:DNA binding"/>
    <property type="evidence" value="ECO:0007669"/>
    <property type="project" value="UniProtKB-KW"/>
</dbReference>
<dbReference type="GO" id="GO:0008270">
    <property type="term" value="F:zinc ion binding"/>
    <property type="evidence" value="ECO:0007669"/>
    <property type="project" value="UniProtKB-UniRule"/>
</dbReference>
<dbReference type="GO" id="GO:0045892">
    <property type="term" value="P:negative regulation of DNA-templated transcription"/>
    <property type="evidence" value="ECO:0007669"/>
    <property type="project" value="UniProtKB-UniRule"/>
</dbReference>
<dbReference type="HAMAP" id="MF_00440">
    <property type="entry name" value="NrdR"/>
    <property type="match status" value="1"/>
</dbReference>
<dbReference type="InterPro" id="IPR005144">
    <property type="entry name" value="ATP-cone_dom"/>
</dbReference>
<dbReference type="InterPro" id="IPR055173">
    <property type="entry name" value="NrdR-like_N"/>
</dbReference>
<dbReference type="InterPro" id="IPR003796">
    <property type="entry name" value="RNR_NrdR-like"/>
</dbReference>
<dbReference type="NCBIfam" id="TIGR00244">
    <property type="entry name" value="transcriptional regulator NrdR"/>
    <property type="match status" value="1"/>
</dbReference>
<dbReference type="PANTHER" id="PTHR30455">
    <property type="entry name" value="TRANSCRIPTIONAL REPRESSOR NRDR"/>
    <property type="match status" value="1"/>
</dbReference>
<dbReference type="PANTHER" id="PTHR30455:SF2">
    <property type="entry name" value="TRANSCRIPTIONAL REPRESSOR NRDR"/>
    <property type="match status" value="1"/>
</dbReference>
<dbReference type="Pfam" id="PF03477">
    <property type="entry name" value="ATP-cone"/>
    <property type="match status" value="1"/>
</dbReference>
<dbReference type="Pfam" id="PF22811">
    <property type="entry name" value="Zn_ribbon_NrdR"/>
    <property type="match status" value="1"/>
</dbReference>
<dbReference type="PROSITE" id="PS51161">
    <property type="entry name" value="ATP_CONE"/>
    <property type="match status" value="1"/>
</dbReference>
<gene>
    <name evidence="1" type="primary">nrdR</name>
    <name type="ordered locus">Rru_A1826</name>
</gene>
<sequence>MRCPFCGNGDTQVKDSRPTEDSAAIRRRRFCPACNSRFTTFERVQLRDLVIVKKDGQRSAFDRDKLARSIRIACRKRPVDEDSIERIVNGIQRRLESSGDTEINSKAVGELVMEGLRGLDPVAYVRFASVYRNFREAKDFEDFVETLGGSAD</sequence>
<reference key="1">
    <citation type="journal article" date="2011" name="Stand. Genomic Sci.">
        <title>Complete genome sequence of Rhodospirillum rubrum type strain (S1).</title>
        <authorList>
            <person name="Munk A.C."/>
            <person name="Copeland A."/>
            <person name="Lucas S."/>
            <person name="Lapidus A."/>
            <person name="Del Rio T.G."/>
            <person name="Barry K."/>
            <person name="Detter J.C."/>
            <person name="Hammon N."/>
            <person name="Israni S."/>
            <person name="Pitluck S."/>
            <person name="Brettin T."/>
            <person name="Bruce D."/>
            <person name="Han C."/>
            <person name="Tapia R."/>
            <person name="Gilna P."/>
            <person name="Schmutz J."/>
            <person name="Larimer F."/>
            <person name="Land M."/>
            <person name="Kyrpides N.C."/>
            <person name="Mavromatis K."/>
            <person name="Richardson P."/>
            <person name="Rohde M."/>
            <person name="Goeker M."/>
            <person name="Klenk H.P."/>
            <person name="Zhang Y."/>
            <person name="Roberts G.P."/>
            <person name="Reslewic S."/>
            <person name="Schwartz D.C."/>
        </authorList>
    </citation>
    <scope>NUCLEOTIDE SEQUENCE [LARGE SCALE GENOMIC DNA]</scope>
    <source>
        <strain>ATCC 11170 / ATH 1.1.1 / DSM 467 / LMG 4362 / NCIMB 8255 / S1</strain>
    </source>
</reference>
<evidence type="ECO:0000255" key="1">
    <source>
        <dbReference type="HAMAP-Rule" id="MF_00440"/>
    </source>
</evidence>
<evidence type="ECO:0000256" key="2">
    <source>
        <dbReference type="SAM" id="MobiDB-lite"/>
    </source>
</evidence>
<name>NRDR_RHORT</name>
<comment type="function">
    <text evidence="1">Negatively regulates transcription of bacterial ribonucleotide reductase nrd genes and operons by binding to NrdR-boxes.</text>
</comment>
<comment type="cofactor">
    <cofactor evidence="1">
        <name>Zn(2+)</name>
        <dbReference type="ChEBI" id="CHEBI:29105"/>
    </cofactor>
    <text evidence="1">Binds 1 zinc ion.</text>
</comment>
<comment type="similarity">
    <text evidence="1">Belongs to the NrdR family.</text>
</comment>
<feature type="chain" id="PRO_0000230888" description="Transcriptional repressor NrdR">
    <location>
        <begin position="1"/>
        <end position="152"/>
    </location>
</feature>
<feature type="domain" description="ATP-cone" evidence="1">
    <location>
        <begin position="49"/>
        <end position="139"/>
    </location>
</feature>
<feature type="zinc finger region" evidence="1">
    <location>
        <begin position="3"/>
        <end position="34"/>
    </location>
</feature>
<feature type="region of interest" description="Disordered" evidence="2">
    <location>
        <begin position="1"/>
        <end position="21"/>
    </location>
</feature>
<feature type="compositionally biased region" description="Basic and acidic residues" evidence="2">
    <location>
        <begin position="12"/>
        <end position="21"/>
    </location>
</feature>
<accession>Q2RTB9</accession>
<protein>
    <recommendedName>
        <fullName evidence="1">Transcriptional repressor NrdR</fullName>
    </recommendedName>
</protein>
<proteinExistence type="inferred from homology"/>
<keyword id="KW-0067">ATP-binding</keyword>
<keyword id="KW-0238">DNA-binding</keyword>
<keyword id="KW-0479">Metal-binding</keyword>
<keyword id="KW-0547">Nucleotide-binding</keyword>
<keyword id="KW-1185">Reference proteome</keyword>
<keyword id="KW-0678">Repressor</keyword>
<keyword id="KW-0804">Transcription</keyword>
<keyword id="KW-0805">Transcription regulation</keyword>
<keyword id="KW-0862">Zinc</keyword>
<keyword id="KW-0863">Zinc-finger</keyword>
<organism>
    <name type="scientific">Rhodospirillum rubrum (strain ATCC 11170 / ATH 1.1.1 / DSM 467 / LMG 4362 / NCIMB 8255 / S1)</name>
    <dbReference type="NCBI Taxonomy" id="269796"/>
    <lineage>
        <taxon>Bacteria</taxon>
        <taxon>Pseudomonadati</taxon>
        <taxon>Pseudomonadota</taxon>
        <taxon>Alphaproteobacteria</taxon>
        <taxon>Rhodospirillales</taxon>
        <taxon>Rhodospirillaceae</taxon>
        <taxon>Rhodospirillum</taxon>
    </lineage>
</organism>